<keyword id="KW-0665">Pyrimidine biosynthesis</keyword>
<keyword id="KW-0808">Transferase</keyword>
<name>PYRB_PSYCK</name>
<dbReference type="EC" id="2.1.3.2" evidence="1"/>
<dbReference type="EMBL" id="CP000323">
    <property type="protein sequence ID" value="ABE74314.1"/>
    <property type="molecule type" value="Genomic_DNA"/>
</dbReference>
<dbReference type="RefSeq" id="WP_011512884.1">
    <property type="nucleotide sequence ID" value="NC_007969.1"/>
</dbReference>
<dbReference type="SMR" id="Q1QDD9"/>
<dbReference type="STRING" id="335284.Pcryo_0531"/>
<dbReference type="KEGG" id="pcr:Pcryo_0531"/>
<dbReference type="eggNOG" id="COG0540">
    <property type="taxonomic scope" value="Bacteria"/>
</dbReference>
<dbReference type="HOGENOM" id="CLU_043846_2_0_6"/>
<dbReference type="UniPathway" id="UPA00070">
    <property type="reaction ID" value="UER00116"/>
</dbReference>
<dbReference type="Proteomes" id="UP000002425">
    <property type="component" value="Chromosome"/>
</dbReference>
<dbReference type="GO" id="GO:0005829">
    <property type="term" value="C:cytosol"/>
    <property type="evidence" value="ECO:0007669"/>
    <property type="project" value="TreeGrafter"/>
</dbReference>
<dbReference type="GO" id="GO:0016597">
    <property type="term" value="F:amino acid binding"/>
    <property type="evidence" value="ECO:0007669"/>
    <property type="project" value="InterPro"/>
</dbReference>
<dbReference type="GO" id="GO:0004070">
    <property type="term" value="F:aspartate carbamoyltransferase activity"/>
    <property type="evidence" value="ECO:0007669"/>
    <property type="project" value="UniProtKB-UniRule"/>
</dbReference>
<dbReference type="GO" id="GO:0006207">
    <property type="term" value="P:'de novo' pyrimidine nucleobase biosynthetic process"/>
    <property type="evidence" value="ECO:0007669"/>
    <property type="project" value="InterPro"/>
</dbReference>
<dbReference type="GO" id="GO:0044205">
    <property type="term" value="P:'de novo' UMP biosynthetic process"/>
    <property type="evidence" value="ECO:0007669"/>
    <property type="project" value="UniProtKB-UniRule"/>
</dbReference>
<dbReference type="GO" id="GO:0006520">
    <property type="term" value="P:amino acid metabolic process"/>
    <property type="evidence" value="ECO:0007669"/>
    <property type="project" value="InterPro"/>
</dbReference>
<dbReference type="FunFam" id="3.40.50.1370:FF:000007">
    <property type="entry name" value="Aspartate carbamoyltransferase"/>
    <property type="match status" value="1"/>
</dbReference>
<dbReference type="Gene3D" id="3.40.50.1370">
    <property type="entry name" value="Aspartate/ornithine carbamoyltransferase"/>
    <property type="match status" value="2"/>
</dbReference>
<dbReference type="HAMAP" id="MF_00001">
    <property type="entry name" value="Asp_carb_tr"/>
    <property type="match status" value="1"/>
</dbReference>
<dbReference type="InterPro" id="IPR006132">
    <property type="entry name" value="Asp/Orn_carbamoyltranf_P-bd"/>
</dbReference>
<dbReference type="InterPro" id="IPR006130">
    <property type="entry name" value="Asp/Orn_carbamoylTrfase"/>
</dbReference>
<dbReference type="InterPro" id="IPR036901">
    <property type="entry name" value="Asp/Orn_carbamoylTrfase_sf"/>
</dbReference>
<dbReference type="InterPro" id="IPR002082">
    <property type="entry name" value="Asp_carbamoyltransf"/>
</dbReference>
<dbReference type="InterPro" id="IPR006131">
    <property type="entry name" value="Asp_carbamoyltransf_Asp/Orn-bd"/>
</dbReference>
<dbReference type="NCBIfam" id="TIGR00670">
    <property type="entry name" value="asp_carb_tr"/>
    <property type="match status" value="1"/>
</dbReference>
<dbReference type="NCBIfam" id="NF002032">
    <property type="entry name" value="PRK00856.1"/>
    <property type="match status" value="1"/>
</dbReference>
<dbReference type="PANTHER" id="PTHR45753:SF6">
    <property type="entry name" value="ASPARTATE CARBAMOYLTRANSFERASE"/>
    <property type="match status" value="1"/>
</dbReference>
<dbReference type="PANTHER" id="PTHR45753">
    <property type="entry name" value="ORNITHINE CARBAMOYLTRANSFERASE, MITOCHONDRIAL"/>
    <property type="match status" value="1"/>
</dbReference>
<dbReference type="Pfam" id="PF00185">
    <property type="entry name" value="OTCace"/>
    <property type="match status" value="1"/>
</dbReference>
<dbReference type="Pfam" id="PF02729">
    <property type="entry name" value="OTCace_N"/>
    <property type="match status" value="1"/>
</dbReference>
<dbReference type="PRINTS" id="PR00100">
    <property type="entry name" value="AOTCASE"/>
</dbReference>
<dbReference type="PRINTS" id="PR00101">
    <property type="entry name" value="ATCASE"/>
</dbReference>
<dbReference type="SUPFAM" id="SSF53671">
    <property type="entry name" value="Aspartate/ornithine carbamoyltransferase"/>
    <property type="match status" value="1"/>
</dbReference>
<dbReference type="PROSITE" id="PS00097">
    <property type="entry name" value="CARBAMOYLTRANSFERASE"/>
    <property type="match status" value="1"/>
</dbReference>
<accession>Q1QDD9</accession>
<organism>
    <name type="scientific">Psychrobacter cryohalolentis (strain ATCC BAA-1226 / DSM 17306 / VKM B-2378 / K5)</name>
    <dbReference type="NCBI Taxonomy" id="335284"/>
    <lineage>
        <taxon>Bacteria</taxon>
        <taxon>Pseudomonadati</taxon>
        <taxon>Pseudomonadota</taxon>
        <taxon>Gammaproteobacteria</taxon>
        <taxon>Moraxellales</taxon>
        <taxon>Moraxellaceae</taxon>
        <taxon>Psychrobacter</taxon>
    </lineage>
</organism>
<comment type="function">
    <text evidence="1">Catalyzes the condensation of carbamoyl phosphate and aspartate to form carbamoyl aspartate and inorganic phosphate, the committed step in the de novo pyrimidine nucleotide biosynthesis pathway.</text>
</comment>
<comment type="catalytic activity">
    <reaction evidence="1">
        <text>carbamoyl phosphate + L-aspartate = N-carbamoyl-L-aspartate + phosphate + H(+)</text>
        <dbReference type="Rhea" id="RHEA:20013"/>
        <dbReference type="ChEBI" id="CHEBI:15378"/>
        <dbReference type="ChEBI" id="CHEBI:29991"/>
        <dbReference type="ChEBI" id="CHEBI:32814"/>
        <dbReference type="ChEBI" id="CHEBI:43474"/>
        <dbReference type="ChEBI" id="CHEBI:58228"/>
        <dbReference type="EC" id="2.1.3.2"/>
    </reaction>
</comment>
<comment type="pathway">
    <text evidence="1">Pyrimidine metabolism; UMP biosynthesis via de novo pathway; (S)-dihydroorotate from bicarbonate: step 2/3.</text>
</comment>
<comment type="subunit">
    <text evidence="1">Heterododecamer (2C3:3R2) of six catalytic PyrB chains organized as two trimers (C3), and six regulatory PyrI chains organized as three dimers (R2).</text>
</comment>
<comment type="similarity">
    <text evidence="1">Belongs to the aspartate/ornithine carbamoyltransferase superfamily. ATCase family.</text>
</comment>
<feature type="chain" id="PRO_0000329114" description="Aspartate carbamoyltransferase catalytic subunit">
    <location>
        <begin position="1"/>
        <end position="357"/>
    </location>
</feature>
<feature type="region of interest" description="Disordered" evidence="2">
    <location>
        <begin position="1"/>
        <end position="21"/>
    </location>
</feature>
<feature type="compositionally biased region" description="Polar residues" evidence="2">
    <location>
        <begin position="1"/>
        <end position="15"/>
    </location>
</feature>
<feature type="binding site" evidence="1">
    <location>
        <position position="97"/>
    </location>
    <ligand>
        <name>carbamoyl phosphate</name>
        <dbReference type="ChEBI" id="CHEBI:58228"/>
    </ligand>
</feature>
<feature type="binding site" evidence="1">
    <location>
        <position position="98"/>
    </location>
    <ligand>
        <name>carbamoyl phosphate</name>
        <dbReference type="ChEBI" id="CHEBI:58228"/>
    </ligand>
</feature>
<feature type="binding site" evidence="1">
    <location>
        <position position="125"/>
    </location>
    <ligand>
        <name>L-aspartate</name>
        <dbReference type="ChEBI" id="CHEBI:29991"/>
    </ligand>
</feature>
<feature type="binding site" evidence="1">
    <location>
        <position position="147"/>
    </location>
    <ligand>
        <name>carbamoyl phosphate</name>
        <dbReference type="ChEBI" id="CHEBI:58228"/>
    </ligand>
</feature>
<feature type="binding site" evidence="1">
    <location>
        <position position="177"/>
    </location>
    <ligand>
        <name>carbamoyl phosphate</name>
        <dbReference type="ChEBI" id="CHEBI:58228"/>
    </ligand>
</feature>
<feature type="binding site" evidence="1">
    <location>
        <position position="180"/>
    </location>
    <ligand>
        <name>carbamoyl phosphate</name>
        <dbReference type="ChEBI" id="CHEBI:58228"/>
    </ligand>
</feature>
<feature type="binding site" evidence="1">
    <location>
        <position position="211"/>
    </location>
    <ligand>
        <name>L-aspartate</name>
        <dbReference type="ChEBI" id="CHEBI:29991"/>
    </ligand>
</feature>
<feature type="binding site" evidence="1">
    <location>
        <position position="266"/>
    </location>
    <ligand>
        <name>L-aspartate</name>
        <dbReference type="ChEBI" id="CHEBI:29991"/>
    </ligand>
</feature>
<feature type="binding site" evidence="1">
    <location>
        <position position="307"/>
    </location>
    <ligand>
        <name>carbamoyl phosphate</name>
        <dbReference type="ChEBI" id="CHEBI:58228"/>
    </ligand>
</feature>
<feature type="binding site" evidence="1">
    <location>
        <position position="308"/>
    </location>
    <ligand>
        <name>carbamoyl phosphate</name>
        <dbReference type="ChEBI" id="CHEBI:58228"/>
    </ligand>
</feature>
<gene>
    <name evidence="1" type="primary">pyrB</name>
    <name type="ordered locus">Pcryo_0531</name>
</gene>
<sequence>MSNSIDSQSLPTVSPTDYARFDPDTIHEKLDASLSRPQLNTDGSIRHFLGIEGLNKAQLQAIIAKAESFFDDKGQLINRPELEGYTVMNLFFEPSTRTRTTFEVAEKRLGANVLNIDIERSSTKKGESLRDTLWNLQAMTADIFVVRHSASGAAHFMATEVTPDIAIINGGDGWHAHPTQGMLDMLTIHREAPRPFEELSVAIVGDIKHSRVARSDISALQTLGVKDIRVCAPRTLLPKGIERFGVQVYENMNECVTDCDVIMGLRIQNERIGSPLLASSSEYYKHYGITPERVALAKPDALVMHPGPMNRGVEIASSVADGAQSVILKQVNNGIAIRMAVLSLAMEGQRAHQAAGH</sequence>
<reference key="1">
    <citation type="submission" date="2006-03" db="EMBL/GenBank/DDBJ databases">
        <title>Complete sequence of chromosome of Psychrobacter cryohalolentis K5.</title>
        <authorList>
            <consortium name="US DOE Joint Genome Institute"/>
            <person name="Copeland A."/>
            <person name="Lucas S."/>
            <person name="Lapidus A."/>
            <person name="Barry K."/>
            <person name="Detter J.C."/>
            <person name="Glavina T."/>
            <person name="Hammon N."/>
            <person name="Israni S."/>
            <person name="Dalin E."/>
            <person name="Tice H."/>
            <person name="Pitluck S."/>
            <person name="Brettin T."/>
            <person name="Bruce D."/>
            <person name="Han C."/>
            <person name="Tapia R."/>
            <person name="Sims D.R."/>
            <person name="Gilna P."/>
            <person name="Schmutz J."/>
            <person name="Larimer F."/>
            <person name="Land M."/>
            <person name="Hauser L."/>
            <person name="Kyrpides N."/>
            <person name="Kim E."/>
            <person name="Richardson P."/>
        </authorList>
    </citation>
    <scope>NUCLEOTIDE SEQUENCE [LARGE SCALE GENOMIC DNA]</scope>
    <source>
        <strain>ATCC BAA-1226 / DSM 17306 / VKM B-2378 / K5</strain>
    </source>
</reference>
<evidence type="ECO:0000255" key="1">
    <source>
        <dbReference type="HAMAP-Rule" id="MF_00001"/>
    </source>
</evidence>
<evidence type="ECO:0000256" key="2">
    <source>
        <dbReference type="SAM" id="MobiDB-lite"/>
    </source>
</evidence>
<protein>
    <recommendedName>
        <fullName evidence="1">Aspartate carbamoyltransferase catalytic subunit</fullName>
        <ecNumber evidence="1">2.1.3.2</ecNumber>
    </recommendedName>
    <alternativeName>
        <fullName evidence="1">Aspartate transcarbamylase</fullName>
        <shortName evidence="1">ATCase</shortName>
    </alternativeName>
</protein>
<proteinExistence type="inferred from homology"/>